<sequence length="258" mass="28010">MSLIDPRAIIDPSARLAADVQVGPWSIVGAEVEIGEGTVIGPHVVLKGPTKIGKHNRIYQFSSVGEDTPDLKYKGEPTRLVIGDHNVIREGVTIHRGTVQDRAETTIGDHNLIMAYAHIGHDSVIGNHCILVNNTALAGHVHVDDWAILSGYTLVHQYCRIGAHSFSGMGSAIGKDVPAYVTVFGNPAEARSMNFEGMRRRGFSSEAIHALRRAYKVVYRQGHTVEEALAELAESAAQFPEVAVFRDSIQSATRGITR</sequence>
<organism>
    <name type="scientific">Pseudomonas aeruginosa (strain LESB58)</name>
    <dbReference type="NCBI Taxonomy" id="557722"/>
    <lineage>
        <taxon>Bacteria</taxon>
        <taxon>Pseudomonadati</taxon>
        <taxon>Pseudomonadota</taxon>
        <taxon>Gammaproteobacteria</taxon>
        <taxon>Pseudomonadales</taxon>
        <taxon>Pseudomonadaceae</taxon>
        <taxon>Pseudomonas</taxon>
    </lineage>
</organism>
<feature type="chain" id="PRO_1000122720" description="Acyl-[acyl-carrier-protein]--UDP-N-acetylglucosamine O-acyltransferase">
    <location>
        <begin position="1"/>
        <end position="258"/>
    </location>
</feature>
<keyword id="KW-0012">Acyltransferase</keyword>
<keyword id="KW-0963">Cytoplasm</keyword>
<keyword id="KW-0441">Lipid A biosynthesis</keyword>
<keyword id="KW-0444">Lipid biosynthesis</keyword>
<keyword id="KW-0443">Lipid metabolism</keyword>
<keyword id="KW-0677">Repeat</keyword>
<keyword id="KW-0808">Transferase</keyword>
<gene>
    <name evidence="1" type="primary">lpxA</name>
    <name type="ordered locus">PLES_13911</name>
</gene>
<reference key="1">
    <citation type="journal article" date="2009" name="Genome Res.">
        <title>Newly introduced genomic prophage islands are critical determinants of in vivo competitiveness in the Liverpool epidemic strain of Pseudomonas aeruginosa.</title>
        <authorList>
            <person name="Winstanley C."/>
            <person name="Langille M.G.I."/>
            <person name="Fothergill J.L."/>
            <person name="Kukavica-Ibrulj I."/>
            <person name="Paradis-Bleau C."/>
            <person name="Sanschagrin F."/>
            <person name="Thomson N.R."/>
            <person name="Winsor G.L."/>
            <person name="Quail M.A."/>
            <person name="Lennard N."/>
            <person name="Bignell A."/>
            <person name="Clarke L."/>
            <person name="Seeger K."/>
            <person name="Saunders D."/>
            <person name="Harris D."/>
            <person name="Parkhill J."/>
            <person name="Hancock R.E.W."/>
            <person name="Brinkman F.S.L."/>
            <person name="Levesque R.C."/>
        </authorList>
    </citation>
    <scope>NUCLEOTIDE SEQUENCE [LARGE SCALE GENOMIC DNA]</scope>
    <source>
        <strain>LESB58</strain>
    </source>
</reference>
<dbReference type="EC" id="2.3.1.129" evidence="1"/>
<dbReference type="EMBL" id="FM209186">
    <property type="protein sequence ID" value="CAW26119.1"/>
    <property type="molecule type" value="Genomic_DNA"/>
</dbReference>
<dbReference type="RefSeq" id="WP_003092373.1">
    <property type="nucleotide sequence ID" value="NC_011770.1"/>
</dbReference>
<dbReference type="SMR" id="B7V7U4"/>
<dbReference type="KEGG" id="pag:PLES_13911"/>
<dbReference type="HOGENOM" id="CLU_061249_0_0_6"/>
<dbReference type="UniPathway" id="UPA00359">
    <property type="reaction ID" value="UER00477"/>
</dbReference>
<dbReference type="GO" id="GO:0005737">
    <property type="term" value="C:cytoplasm"/>
    <property type="evidence" value="ECO:0007669"/>
    <property type="project" value="UniProtKB-SubCell"/>
</dbReference>
<dbReference type="GO" id="GO:0016020">
    <property type="term" value="C:membrane"/>
    <property type="evidence" value="ECO:0007669"/>
    <property type="project" value="GOC"/>
</dbReference>
<dbReference type="GO" id="GO:0008780">
    <property type="term" value="F:acyl-[acyl-carrier-protein]-UDP-N-acetylglucosamine O-acyltransferase activity"/>
    <property type="evidence" value="ECO:0007669"/>
    <property type="project" value="UniProtKB-UniRule"/>
</dbReference>
<dbReference type="GO" id="GO:0009245">
    <property type="term" value="P:lipid A biosynthetic process"/>
    <property type="evidence" value="ECO:0007669"/>
    <property type="project" value="UniProtKB-UniRule"/>
</dbReference>
<dbReference type="CDD" id="cd03351">
    <property type="entry name" value="LbH_UDP-GlcNAc_AT"/>
    <property type="match status" value="1"/>
</dbReference>
<dbReference type="FunFam" id="1.20.1180.10:FF:000001">
    <property type="entry name" value="Acyl-[acyl-carrier-protein]--UDP-N-acetylglucosamine O-acyltransferase"/>
    <property type="match status" value="1"/>
</dbReference>
<dbReference type="FunFam" id="2.160.10.10:FF:000003">
    <property type="entry name" value="Acyl-[acyl-carrier-protein]--UDP-N-acetylglucosamine O-acyltransferase"/>
    <property type="match status" value="1"/>
</dbReference>
<dbReference type="Gene3D" id="2.160.10.10">
    <property type="entry name" value="Hexapeptide repeat proteins"/>
    <property type="match status" value="1"/>
</dbReference>
<dbReference type="Gene3D" id="1.20.1180.10">
    <property type="entry name" value="Udp N-acetylglucosamine O-acyltransferase, C-terminal domain"/>
    <property type="match status" value="1"/>
</dbReference>
<dbReference type="HAMAP" id="MF_00387">
    <property type="entry name" value="LpxA"/>
    <property type="match status" value="1"/>
</dbReference>
<dbReference type="InterPro" id="IPR029098">
    <property type="entry name" value="Acetyltransf_C"/>
</dbReference>
<dbReference type="InterPro" id="IPR037157">
    <property type="entry name" value="Acetyltransf_C_sf"/>
</dbReference>
<dbReference type="InterPro" id="IPR001451">
    <property type="entry name" value="Hexapep"/>
</dbReference>
<dbReference type="InterPro" id="IPR018357">
    <property type="entry name" value="Hexapep_transf_CS"/>
</dbReference>
<dbReference type="InterPro" id="IPR010137">
    <property type="entry name" value="Lipid_A_LpxA"/>
</dbReference>
<dbReference type="InterPro" id="IPR011004">
    <property type="entry name" value="Trimer_LpxA-like_sf"/>
</dbReference>
<dbReference type="NCBIfam" id="TIGR01852">
    <property type="entry name" value="lipid_A_lpxA"/>
    <property type="match status" value="1"/>
</dbReference>
<dbReference type="NCBIfam" id="NF003657">
    <property type="entry name" value="PRK05289.1"/>
    <property type="match status" value="1"/>
</dbReference>
<dbReference type="PANTHER" id="PTHR43480">
    <property type="entry name" value="ACYL-[ACYL-CARRIER-PROTEIN]--UDP-N-ACETYLGLUCOSAMINE O-ACYLTRANSFERASE"/>
    <property type="match status" value="1"/>
</dbReference>
<dbReference type="PANTHER" id="PTHR43480:SF1">
    <property type="entry name" value="ACYL-[ACYL-CARRIER-PROTEIN]--UDP-N-ACETYLGLUCOSAMINE O-ACYLTRANSFERASE, MITOCHONDRIAL-RELATED"/>
    <property type="match status" value="1"/>
</dbReference>
<dbReference type="Pfam" id="PF13720">
    <property type="entry name" value="Acetyltransf_11"/>
    <property type="match status" value="1"/>
</dbReference>
<dbReference type="Pfam" id="PF00132">
    <property type="entry name" value="Hexapep"/>
    <property type="match status" value="2"/>
</dbReference>
<dbReference type="PIRSF" id="PIRSF000456">
    <property type="entry name" value="UDP-GlcNAc_acltr"/>
    <property type="match status" value="1"/>
</dbReference>
<dbReference type="SUPFAM" id="SSF51161">
    <property type="entry name" value="Trimeric LpxA-like enzymes"/>
    <property type="match status" value="1"/>
</dbReference>
<dbReference type="PROSITE" id="PS00101">
    <property type="entry name" value="HEXAPEP_TRANSFERASES"/>
    <property type="match status" value="1"/>
</dbReference>
<protein>
    <recommendedName>
        <fullName evidence="1">Acyl-[acyl-carrier-protein]--UDP-N-acetylglucosamine O-acyltransferase</fullName>
        <shortName evidence="1">UDP-N-acetylglucosamine acyltransferase</shortName>
        <ecNumber evidence="1">2.3.1.129</ecNumber>
    </recommendedName>
</protein>
<name>LPXA_PSEA8</name>
<accession>B7V7U4</accession>
<proteinExistence type="inferred from homology"/>
<comment type="function">
    <text evidence="1">Involved in the biosynthesis of lipid A, a phosphorylated glycolipid that anchors the lipopolysaccharide to the outer membrane of the cell.</text>
</comment>
<comment type="catalytic activity">
    <reaction evidence="1">
        <text>a (3R)-hydroxyacyl-[ACP] + UDP-N-acetyl-alpha-D-glucosamine = a UDP-3-O-[(3R)-3-hydroxyacyl]-N-acetyl-alpha-D-glucosamine + holo-[ACP]</text>
        <dbReference type="Rhea" id="RHEA:67812"/>
        <dbReference type="Rhea" id="RHEA-COMP:9685"/>
        <dbReference type="Rhea" id="RHEA-COMP:9945"/>
        <dbReference type="ChEBI" id="CHEBI:57705"/>
        <dbReference type="ChEBI" id="CHEBI:64479"/>
        <dbReference type="ChEBI" id="CHEBI:78827"/>
        <dbReference type="ChEBI" id="CHEBI:173225"/>
        <dbReference type="EC" id="2.3.1.129"/>
    </reaction>
</comment>
<comment type="pathway">
    <text evidence="1">Glycolipid biosynthesis; lipid IV(A) biosynthesis; lipid IV(A) from (3R)-3-hydroxytetradecanoyl-[acyl-carrier-protein] and UDP-N-acetyl-alpha-D-glucosamine: step 1/6.</text>
</comment>
<comment type="subunit">
    <text evidence="1">Homotrimer.</text>
</comment>
<comment type="subcellular location">
    <subcellularLocation>
        <location evidence="1">Cytoplasm</location>
    </subcellularLocation>
</comment>
<comment type="similarity">
    <text evidence="1">Belongs to the transferase hexapeptide repeat family. LpxA subfamily.</text>
</comment>
<evidence type="ECO:0000255" key="1">
    <source>
        <dbReference type="HAMAP-Rule" id="MF_00387"/>
    </source>
</evidence>